<sequence>MALLPDKEKLLRNFLRCANWEEKYLYIIELGQRLPELRDEDRSPQNSIQGCQSQVWIVMRQNAQGIIELQGDSDAAIVKGLIAVVFILYDQMTPQDIVNFDVRPWFEKMALTQHLTPSRSQGLEAMIRAIRAKAAALS</sequence>
<protein>
    <recommendedName>
        <fullName evidence="1">Cysteine desulfuration protein SufE</fullName>
    </recommendedName>
</protein>
<reference key="1">
    <citation type="journal article" date="2008" name="J. Bacteriol.">
        <title>Insights into the environmental resistance gene pool from the genome sequence of the multidrug-resistant environmental isolate Escherichia coli SMS-3-5.</title>
        <authorList>
            <person name="Fricke W.F."/>
            <person name="Wright M.S."/>
            <person name="Lindell A.H."/>
            <person name="Harkins D.M."/>
            <person name="Baker-Austin C."/>
            <person name="Ravel J."/>
            <person name="Stepanauskas R."/>
        </authorList>
    </citation>
    <scope>NUCLEOTIDE SEQUENCE [LARGE SCALE GENOMIC DNA]</scope>
    <source>
        <strain>SMS-3-5 / SECEC</strain>
    </source>
</reference>
<keyword id="KW-0963">Cytoplasm</keyword>
<evidence type="ECO:0000255" key="1">
    <source>
        <dbReference type="HAMAP-Rule" id="MF_01832"/>
    </source>
</evidence>
<comment type="function">
    <text evidence="1">Participates in cysteine desulfuration mediated by SufS. Cysteine desulfuration mobilizes sulfur from L-cysteine to yield L-alanine and constitutes an essential step in sulfur metabolism for biosynthesis of a variety of sulfur-containing biomolecules. Functions as a sulfur acceptor for SufS, by mediating the direct transfer of the sulfur atom from the S-sulfanylcysteine of SufS, an intermediate product of cysteine desulfuration process.</text>
</comment>
<comment type="pathway">
    <text evidence="1">Cofactor biosynthesis; iron-sulfur cluster biosynthesis.</text>
</comment>
<comment type="subunit">
    <text evidence="1">Homodimer. Interacts with SufS.</text>
</comment>
<comment type="subcellular location">
    <subcellularLocation>
        <location evidence="1">Cytoplasm</location>
    </subcellularLocation>
</comment>
<comment type="similarity">
    <text evidence="1">Belongs to the SufE family.</text>
</comment>
<feature type="chain" id="PRO_1000188327" description="Cysteine desulfuration protein SufE">
    <location>
        <begin position="1"/>
        <end position="138"/>
    </location>
</feature>
<feature type="active site" description="Cysteine persulfide intermediate" evidence="1">
    <location>
        <position position="51"/>
    </location>
</feature>
<dbReference type="EMBL" id="CP000970">
    <property type="protein sequence ID" value="ACB16404.1"/>
    <property type="molecule type" value="Genomic_DNA"/>
</dbReference>
<dbReference type="RefSeq" id="WP_001196530.1">
    <property type="nucleotide sequence ID" value="NC_010498.1"/>
</dbReference>
<dbReference type="SMR" id="B1LE57"/>
<dbReference type="KEGG" id="ecm:EcSMS35_1517"/>
<dbReference type="HOGENOM" id="CLU_124502_1_1_6"/>
<dbReference type="UniPathway" id="UPA00266"/>
<dbReference type="Proteomes" id="UP000007011">
    <property type="component" value="Chromosome"/>
</dbReference>
<dbReference type="GO" id="GO:0005737">
    <property type="term" value="C:cytoplasm"/>
    <property type="evidence" value="ECO:0007669"/>
    <property type="project" value="UniProtKB-SubCell"/>
</dbReference>
<dbReference type="GO" id="GO:0016226">
    <property type="term" value="P:iron-sulfur cluster assembly"/>
    <property type="evidence" value="ECO:0007669"/>
    <property type="project" value="InterPro"/>
</dbReference>
<dbReference type="GO" id="GO:0006790">
    <property type="term" value="P:sulfur compound metabolic process"/>
    <property type="evidence" value="ECO:0007669"/>
    <property type="project" value="InterPro"/>
</dbReference>
<dbReference type="FunFam" id="3.90.1010.10:FF:000004">
    <property type="entry name" value="Cysteine desulfuration protein SufE"/>
    <property type="match status" value="1"/>
</dbReference>
<dbReference type="Gene3D" id="3.90.1010.10">
    <property type="match status" value="1"/>
</dbReference>
<dbReference type="HAMAP" id="MF_01832">
    <property type="entry name" value="SufE"/>
    <property type="match status" value="1"/>
</dbReference>
<dbReference type="InterPro" id="IPR023939">
    <property type="entry name" value="Cysteine_desulfuration_SufE"/>
</dbReference>
<dbReference type="InterPro" id="IPR003808">
    <property type="entry name" value="Fe-S_metab-assoc_dom"/>
</dbReference>
<dbReference type="NCBIfam" id="NF006792">
    <property type="entry name" value="PRK09296.1"/>
    <property type="match status" value="1"/>
</dbReference>
<dbReference type="PANTHER" id="PTHR43597:SF3">
    <property type="entry name" value="CYSTEINE DESULFURATION PROTEIN SUFE"/>
    <property type="match status" value="1"/>
</dbReference>
<dbReference type="PANTHER" id="PTHR43597">
    <property type="entry name" value="SULFUR ACCEPTOR PROTEIN CSDE"/>
    <property type="match status" value="1"/>
</dbReference>
<dbReference type="Pfam" id="PF02657">
    <property type="entry name" value="SufE"/>
    <property type="match status" value="1"/>
</dbReference>
<dbReference type="SUPFAM" id="SSF82649">
    <property type="entry name" value="SufE/NifU"/>
    <property type="match status" value="1"/>
</dbReference>
<proteinExistence type="inferred from homology"/>
<organism>
    <name type="scientific">Escherichia coli (strain SMS-3-5 / SECEC)</name>
    <dbReference type="NCBI Taxonomy" id="439855"/>
    <lineage>
        <taxon>Bacteria</taxon>
        <taxon>Pseudomonadati</taxon>
        <taxon>Pseudomonadota</taxon>
        <taxon>Gammaproteobacteria</taxon>
        <taxon>Enterobacterales</taxon>
        <taxon>Enterobacteriaceae</taxon>
        <taxon>Escherichia</taxon>
    </lineage>
</organism>
<gene>
    <name evidence="1" type="primary">sufE</name>
    <name type="ordered locus">EcSMS35_1517</name>
</gene>
<name>SUFE_ECOSM</name>
<accession>B1LE57</accession>